<accession>Q11SZ7</accession>
<feature type="chain" id="PRO_0000346038" description="Protoheme IX farnesyltransferase">
    <location>
        <begin position="1"/>
        <end position="286"/>
    </location>
</feature>
<feature type="transmembrane region" description="Helical" evidence="1">
    <location>
        <begin position="14"/>
        <end position="31"/>
    </location>
</feature>
<feature type="transmembrane region" description="Helical" evidence="1">
    <location>
        <begin position="38"/>
        <end position="58"/>
    </location>
</feature>
<feature type="transmembrane region" description="Helical" evidence="1">
    <location>
        <begin position="94"/>
        <end position="114"/>
    </location>
</feature>
<feature type="transmembrane region" description="Helical" evidence="1">
    <location>
        <begin position="135"/>
        <end position="155"/>
    </location>
</feature>
<feature type="transmembrane region" description="Helical" evidence="1">
    <location>
        <begin position="165"/>
        <end position="185"/>
    </location>
</feature>
<feature type="transmembrane region" description="Helical" evidence="1">
    <location>
        <begin position="207"/>
        <end position="227"/>
    </location>
</feature>
<feature type="transmembrane region" description="Helical" evidence="1">
    <location>
        <begin position="228"/>
        <end position="248"/>
    </location>
</feature>
<feature type="transmembrane region" description="Helical" evidence="1">
    <location>
        <begin position="262"/>
        <end position="282"/>
    </location>
</feature>
<name>COXX_CYTH3</name>
<reference key="1">
    <citation type="journal article" date="2007" name="Appl. Environ. Microbiol.">
        <title>Genome sequence of the cellulolytic gliding bacterium Cytophaga hutchinsonii.</title>
        <authorList>
            <person name="Xie G."/>
            <person name="Bruce D.C."/>
            <person name="Challacombe J.F."/>
            <person name="Chertkov O."/>
            <person name="Detter J.C."/>
            <person name="Gilna P."/>
            <person name="Han C.S."/>
            <person name="Lucas S."/>
            <person name="Misra M."/>
            <person name="Myers G.L."/>
            <person name="Richardson P."/>
            <person name="Tapia R."/>
            <person name="Thayer N."/>
            <person name="Thompson L.S."/>
            <person name="Brettin T.S."/>
            <person name="Henrissat B."/>
            <person name="Wilson D.B."/>
            <person name="McBride M.J."/>
        </authorList>
    </citation>
    <scope>NUCLEOTIDE SEQUENCE [LARGE SCALE GENOMIC DNA]</scope>
    <source>
        <strain>ATCC 33406 / DSM 1761 / JCM 20678 / CIP 103989 / IAM 12607 / NBRC 15051 / NCIMB 9469 / D465</strain>
    </source>
</reference>
<comment type="function">
    <text evidence="1">Converts heme B (protoheme IX) to heme O by substitution of the vinyl group on carbon 2 of heme B porphyrin ring with a hydroxyethyl farnesyl side group.</text>
</comment>
<comment type="catalytic activity">
    <reaction evidence="1">
        <text>heme b + (2E,6E)-farnesyl diphosphate + H2O = Fe(II)-heme o + diphosphate</text>
        <dbReference type="Rhea" id="RHEA:28070"/>
        <dbReference type="ChEBI" id="CHEBI:15377"/>
        <dbReference type="ChEBI" id="CHEBI:33019"/>
        <dbReference type="ChEBI" id="CHEBI:60344"/>
        <dbReference type="ChEBI" id="CHEBI:60530"/>
        <dbReference type="ChEBI" id="CHEBI:175763"/>
        <dbReference type="EC" id="2.5.1.141"/>
    </reaction>
</comment>
<comment type="pathway">
    <text evidence="1">Porphyrin-containing compound metabolism; heme O biosynthesis; heme O from protoheme: step 1/1.</text>
</comment>
<comment type="subcellular location">
    <subcellularLocation>
        <location evidence="1">Cell inner membrane</location>
        <topology evidence="1">Multi-pass membrane protein</topology>
    </subcellularLocation>
</comment>
<comment type="miscellaneous">
    <text evidence="1">Carbon 2 of the heme B porphyrin ring is defined according to the Fischer nomenclature.</text>
</comment>
<comment type="similarity">
    <text evidence="1">Belongs to the UbiA prenyltransferase family. Protoheme IX farnesyltransferase subfamily.</text>
</comment>
<comment type="sequence caution" evidence="2">
    <conflict type="erroneous initiation">
        <sequence resource="EMBL-CDS" id="ABG59467"/>
    </conflict>
</comment>
<dbReference type="EC" id="2.5.1.141" evidence="1"/>
<dbReference type="EMBL" id="CP000383">
    <property type="protein sequence ID" value="ABG59467.1"/>
    <property type="status" value="ALT_INIT"/>
    <property type="molecule type" value="Genomic_DNA"/>
</dbReference>
<dbReference type="SMR" id="Q11SZ7"/>
<dbReference type="STRING" id="269798.CHU_2204"/>
<dbReference type="KEGG" id="chu:CHU_2204"/>
<dbReference type="eggNOG" id="COG0109">
    <property type="taxonomic scope" value="Bacteria"/>
</dbReference>
<dbReference type="HOGENOM" id="CLU_029631_3_2_10"/>
<dbReference type="OrthoDB" id="9814417at2"/>
<dbReference type="UniPathway" id="UPA00834">
    <property type="reaction ID" value="UER00712"/>
</dbReference>
<dbReference type="Proteomes" id="UP000001822">
    <property type="component" value="Chromosome"/>
</dbReference>
<dbReference type="GO" id="GO:0005886">
    <property type="term" value="C:plasma membrane"/>
    <property type="evidence" value="ECO:0007669"/>
    <property type="project" value="UniProtKB-SubCell"/>
</dbReference>
<dbReference type="GO" id="GO:0008495">
    <property type="term" value="F:protoheme IX farnesyltransferase activity"/>
    <property type="evidence" value="ECO:0007669"/>
    <property type="project" value="UniProtKB-UniRule"/>
</dbReference>
<dbReference type="GO" id="GO:0006784">
    <property type="term" value="P:heme A biosynthetic process"/>
    <property type="evidence" value="ECO:0007669"/>
    <property type="project" value="TreeGrafter"/>
</dbReference>
<dbReference type="GO" id="GO:0048034">
    <property type="term" value="P:heme O biosynthetic process"/>
    <property type="evidence" value="ECO:0007669"/>
    <property type="project" value="UniProtKB-UniRule"/>
</dbReference>
<dbReference type="CDD" id="cd13957">
    <property type="entry name" value="PT_UbiA_Cox10"/>
    <property type="match status" value="1"/>
</dbReference>
<dbReference type="Gene3D" id="1.10.357.140">
    <property type="entry name" value="UbiA prenyltransferase"/>
    <property type="match status" value="1"/>
</dbReference>
<dbReference type="HAMAP" id="MF_00154">
    <property type="entry name" value="CyoE_CtaB"/>
    <property type="match status" value="1"/>
</dbReference>
<dbReference type="InterPro" id="IPR006369">
    <property type="entry name" value="Protohaem_IX_farnesylTrfase"/>
</dbReference>
<dbReference type="InterPro" id="IPR000537">
    <property type="entry name" value="UbiA_prenyltransferase"/>
</dbReference>
<dbReference type="InterPro" id="IPR044878">
    <property type="entry name" value="UbiA_sf"/>
</dbReference>
<dbReference type="NCBIfam" id="TIGR01473">
    <property type="entry name" value="cyoE_ctaB"/>
    <property type="match status" value="1"/>
</dbReference>
<dbReference type="PANTHER" id="PTHR43448">
    <property type="entry name" value="PROTOHEME IX FARNESYLTRANSFERASE, MITOCHONDRIAL"/>
    <property type="match status" value="1"/>
</dbReference>
<dbReference type="PANTHER" id="PTHR43448:SF2">
    <property type="entry name" value="PROTOHEME IX FARNESYLTRANSFERASE, MITOCHONDRIAL"/>
    <property type="match status" value="1"/>
</dbReference>
<dbReference type="Pfam" id="PF01040">
    <property type="entry name" value="UbiA"/>
    <property type="match status" value="1"/>
</dbReference>
<proteinExistence type="inferred from homology"/>
<evidence type="ECO:0000255" key="1">
    <source>
        <dbReference type="HAMAP-Rule" id="MF_00154"/>
    </source>
</evidence>
<evidence type="ECO:0000305" key="2"/>
<sequence>MASQFQAYFKLTKFRLTSTVAFSSGMGYILAERGQVDWLNLVLFLIGGFSITVSANIINQIIERESDKLMKRTASRPLPEGIITVQQAIITSALFLIAGTVILAVYSTLNALILSLISLVIYSFIYTPLKTVSPIAVFIGAFPGAFPPMIGWIAVTGEYGWEPGVLFAIQFLWQFPHFWAIAWVLDEEYKKAGIKLLPTKDGRSKHTATIIMTYTLCLLPLGFLPYLFGMSGITSAYIALACGILFFFQTMYLWKECSVKAALLLMFGSFLYLPIVQIAFVLDKIY</sequence>
<organism>
    <name type="scientific">Cytophaga hutchinsonii (strain ATCC 33406 / DSM 1761 / CIP 103989 / NBRC 15051 / NCIMB 9469 / D465)</name>
    <dbReference type="NCBI Taxonomy" id="269798"/>
    <lineage>
        <taxon>Bacteria</taxon>
        <taxon>Pseudomonadati</taxon>
        <taxon>Bacteroidota</taxon>
        <taxon>Cytophagia</taxon>
        <taxon>Cytophagales</taxon>
        <taxon>Cytophagaceae</taxon>
        <taxon>Cytophaga</taxon>
    </lineage>
</organism>
<protein>
    <recommendedName>
        <fullName evidence="1">Protoheme IX farnesyltransferase</fullName>
        <ecNumber evidence="1">2.5.1.141</ecNumber>
    </recommendedName>
    <alternativeName>
        <fullName evidence="1">Heme B farnesyltransferase</fullName>
    </alternativeName>
    <alternativeName>
        <fullName evidence="1">Heme O synthase</fullName>
    </alternativeName>
</protein>
<keyword id="KW-0997">Cell inner membrane</keyword>
<keyword id="KW-1003">Cell membrane</keyword>
<keyword id="KW-0350">Heme biosynthesis</keyword>
<keyword id="KW-0472">Membrane</keyword>
<keyword id="KW-1185">Reference proteome</keyword>
<keyword id="KW-0808">Transferase</keyword>
<keyword id="KW-0812">Transmembrane</keyword>
<keyword id="KW-1133">Transmembrane helix</keyword>
<gene>
    <name evidence="1" type="primary">ctaB</name>
    <name type="synonym">cox15</name>
    <name type="ordered locus">CHU_2204</name>
</gene>